<keyword id="KW-0067">ATP-binding</keyword>
<keyword id="KW-0997">Cell inner membrane</keyword>
<keyword id="KW-1003">Cell membrane</keyword>
<keyword id="KW-0472">Membrane</keyword>
<keyword id="KW-0500">Molybdenum</keyword>
<keyword id="KW-0547">Nucleotide-binding</keyword>
<keyword id="KW-1278">Translocase</keyword>
<keyword id="KW-0813">Transport</keyword>
<accession>Q4KB64</accession>
<reference key="1">
    <citation type="journal article" date="2005" name="Nat. Biotechnol.">
        <title>Complete genome sequence of the plant commensal Pseudomonas fluorescens Pf-5.</title>
        <authorList>
            <person name="Paulsen I.T."/>
            <person name="Press C.M."/>
            <person name="Ravel J."/>
            <person name="Kobayashi D.Y."/>
            <person name="Myers G.S.A."/>
            <person name="Mavrodi D.V."/>
            <person name="DeBoy R.T."/>
            <person name="Seshadri R."/>
            <person name="Ren Q."/>
            <person name="Madupu R."/>
            <person name="Dodson R.J."/>
            <person name="Durkin A.S."/>
            <person name="Brinkac L.M."/>
            <person name="Daugherty S.C."/>
            <person name="Sullivan S.A."/>
            <person name="Rosovitz M.J."/>
            <person name="Gwinn M.L."/>
            <person name="Zhou L."/>
            <person name="Schneider D.J."/>
            <person name="Cartinhour S.W."/>
            <person name="Nelson W.C."/>
            <person name="Weidman J."/>
            <person name="Watkins K."/>
            <person name="Tran K."/>
            <person name="Khouri H."/>
            <person name="Pierson E.A."/>
            <person name="Pierson L.S. III"/>
            <person name="Thomashow L.S."/>
            <person name="Loper J.E."/>
        </authorList>
    </citation>
    <scope>NUCLEOTIDE SEQUENCE [LARGE SCALE GENOMIC DNA]</scope>
    <source>
        <strain>ATCC BAA-477 / NRRL B-23932 / Pf-5</strain>
    </source>
</reference>
<protein>
    <recommendedName>
        <fullName evidence="1">Molybdenum import ATP-binding protein ModC</fullName>
        <ecNumber evidence="1">7.3.2.5</ecNumber>
    </recommendedName>
</protein>
<comment type="function">
    <text evidence="1">Part of the ABC transporter complex ModABC involved in molybdenum import. Responsible for energy coupling to the transport system.</text>
</comment>
<comment type="catalytic activity">
    <reaction evidence="1">
        <text>molybdate(out) + ATP + H2O = molybdate(in) + ADP + phosphate + H(+)</text>
        <dbReference type="Rhea" id="RHEA:22020"/>
        <dbReference type="ChEBI" id="CHEBI:15377"/>
        <dbReference type="ChEBI" id="CHEBI:15378"/>
        <dbReference type="ChEBI" id="CHEBI:30616"/>
        <dbReference type="ChEBI" id="CHEBI:36264"/>
        <dbReference type="ChEBI" id="CHEBI:43474"/>
        <dbReference type="ChEBI" id="CHEBI:456216"/>
        <dbReference type="EC" id="7.3.2.5"/>
    </reaction>
</comment>
<comment type="subunit">
    <text evidence="1">The complex is composed of two ATP-binding proteins (ModC), two transmembrane proteins (ModB) and a solute-binding protein (ModA).</text>
</comment>
<comment type="subcellular location">
    <subcellularLocation>
        <location evidence="1">Cell inner membrane</location>
        <topology evidence="1">Peripheral membrane protein</topology>
    </subcellularLocation>
</comment>
<comment type="similarity">
    <text evidence="1">Belongs to the ABC transporter superfamily. Molybdate importer (TC 3.A.1.8) family.</text>
</comment>
<sequence length="360" mass="39657">MSIHVKLHLGYQDFALDLDLQLPGRGVTALYGHSGSGKTTCLRCIAGLEKAGRGRIQINDEVWQDSQRKLFVPPHKRSLGYVFQEASLFAHLSVQANLEFGLRRIAKAQRRVDMAQATELLGIGHLLQRHPQHLSGGERQRIGIARALLTSPRLLLMDEPLAALDSKRKSEILPYLERLHDELDIPVLYVSHSQDEVARLADHIVLLSDGRALASGPVGETLARLDLPLALGDDAGVVVEGRVSHYDPDYQLLTLQLPGSQLTIRVAHEPLALGKALRFKVQARDVSLSLQDSEHSSILNRLPVTVRDEIPADNAAHVLVRLDVAGSPLLARITRFSRDQLSLHPGQQLWAQIKAVAVLA</sequence>
<organism>
    <name type="scientific">Pseudomonas fluorescens (strain ATCC BAA-477 / NRRL B-23932 / Pf-5)</name>
    <dbReference type="NCBI Taxonomy" id="220664"/>
    <lineage>
        <taxon>Bacteria</taxon>
        <taxon>Pseudomonadati</taxon>
        <taxon>Pseudomonadota</taxon>
        <taxon>Gammaproteobacteria</taxon>
        <taxon>Pseudomonadales</taxon>
        <taxon>Pseudomonadaceae</taxon>
        <taxon>Pseudomonas</taxon>
    </lineage>
</organism>
<feature type="chain" id="PRO_0000271677" description="Molybdenum import ATP-binding protein ModC">
    <location>
        <begin position="1"/>
        <end position="360"/>
    </location>
</feature>
<feature type="domain" description="ABC transporter" evidence="1">
    <location>
        <begin position="5"/>
        <end position="234"/>
    </location>
</feature>
<feature type="domain" description="Mop" evidence="2">
    <location>
        <begin position="295"/>
        <end position="360"/>
    </location>
</feature>
<feature type="binding site" evidence="1">
    <location>
        <begin position="32"/>
        <end position="39"/>
    </location>
    <ligand>
        <name>ATP</name>
        <dbReference type="ChEBI" id="CHEBI:30616"/>
    </ligand>
</feature>
<name>MODC_PSEF5</name>
<evidence type="ECO:0000255" key="1">
    <source>
        <dbReference type="HAMAP-Rule" id="MF_01705"/>
    </source>
</evidence>
<evidence type="ECO:0000255" key="2">
    <source>
        <dbReference type="PROSITE-ProRule" id="PRU01213"/>
    </source>
</evidence>
<gene>
    <name evidence="1" type="primary">modC</name>
    <name type="ordered locus">PFL_3414</name>
</gene>
<dbReference type="EC" id="7.3.2.5" evidence="1"/>
<dbReference type="EMBL" id="CP000076">
    <property type="protein sequence ID" value="AAY92683.1"/>
    <property type="molecule type" value="Genomic_DNA"/>
</dbReference>
<dbReference type="RefSeq" id="WP_011061696.1">
    <property type="nucleotide sequence ID" value="NC_004129.6"/>
</dbReference>
<dbReference type="SMR" id="Q4KB64"/>
<dbReference type="STRING" id="220664.PFL_3414"/>
<dbReference type="KEGG" id="pfl:PFL_3414"/>
<dbReference type="PATRIC" id="fig|220664.5.peg.3484"/>
<dbReference type="eggNOG" id="COG4148">
    <property type="taxonomic scope" value="Bacteria"/>
</dbReference>
<dbReference type="HOGENOM" id="CLU_000604_1_1_6"/>
<dbReference type="Proteomes" id="UP000008540">
    <property type="component" value="Chromosome"/>
</dbReference>
<dbReference type="GO" id="GO:0005886">
    <property type="term" value="C:plasma membrane"/>
    <property type="evidence" value="ECO:0007669"/>
    <property type="project" value="UniProtKB-SubCell"/>
</dbReference>
<dbReference type="GO" id="GO:0015412">
    <property type="term" value="F:ABC-type molybdate transporter activity"/>
    <property type="evidence" value="ECO:0007669"/>
    <property type="project" value="UniProtKB-EC"/>
</dbReference>
<dbReference type="GO" id="GO:0005524">
    <property type="term" value="F:ATP binding"/>
    <property type="evidence" value="ECO:0007669"/>
    <property type="project" value="UniProtKB-KW"/>
</dbReference>
<dbReference type="GO" id="GO:0016887">
    <property type="term" value="F:ATP hydrolysis activity"/>
    <property type="evidence" value="ECO:0007669"/>
    <property type="project" value="InterPro"/>
</dbReference>
<dbReference type="FunFam" id="3.40.50.300:FF:000634">
    <property type="entry name" value="Molybdenum import ATP-binding protein ModC"/>
    <property type="match status" value="1"/>
</dbReference>
<dbReference type="Gene3D" id="2.40.50.100">
    <property type="match status" value="1"/>
</dbReference>
<dbReference type="Gene3D" id="3.40.50.300">
    <property type="entry name" value="P-loop containing nucleotide triphosphate hydrolases"/>
    <property type="match status" value="1"/>
</dbReference>
<dbReference type="InterPro" id="IPR003593">
    <property type="entry name" value="AAA+_ATPase"/>
</dbReference>
<dbReference type="InterPro" id="IPR003439">
    <property type="entry name" value="ABC_transporter-like_ATP-bd"/>
</dbReference>
<dbReference type="InterPro" id="IPR017871">
    <property type="entry name" value="ABC_transporter-like_CS"/>
</dbReference>
<dbReference type="InterPro" id="IPR008995">
    <property type="entry name" value="Mo/tungstate-bd_C_term_dom"/>
</dbReference>
<dbReference type="InterPro" id="IPR011868">
    <property type="entry name" value="ModC_ABC_ATP-bd"/>
</dbReference>
<dbReference type="InterPro" id="IPR050334">
    <property type="entry name" value="Molybdenum_import_ModC"/>
</dbReference>
<dbReference type="InterPro" id="IPR004606">
    <property type="entry name" value="Mop_domain"/>
</dbReference>
<dbReference type="InterPro" id="IPR027417">
    <property type="entry name" value="P-loop_NTPase"/>
</dbReference>
<dbReference type="InterPro" id="IPR005116">
    <property type="entry name" value="Transp-assoc_OB_typ1"/>
</dbReference>
<dbReference type="NCBIfam" id="TIGR02142">
    <property type="entry name" value="modC_ABC"/>
    <property type="match status" value="1"/>
</dbReference>
<dbReference type="PANTHER" id="PTHR43514">
    <property type="entry name" value="ABC TRANSPORTER I FAMILY MEMBER 10"/>
    <property type="match status" value="1"/>
</dbReference>
<dbReference type="PANTHER" id="PTHR43514:SF10">
    <property type="entry name" value="MOLYBDENUM IMPORT ATP-BINDING PROTEIN MODC 2"/>
    <property type="match status" value="1"/>
</dbReference>
<dbReference type="Pfam" id="PF00005">
    <property type="entry name" value="ABC_tran"/>
    <property type="match status" value="1"/>
</dbReference>
<dbReference type="Pfam" id="PF03459">
    <property type="entry name" value="TOBE"/>
    <property type="match status" value="1"/>
</dbReference>
<dbReference type="SMART" id="SM00382">
    <property type="entry name" value="AAA"/>
    <property type="match status" value="1"/>
</dbReference>
<dbReference type="SUPFAM" id="SSF50331">
    <property type="entry name" value="MOP-like"/>
    <property type="match status" value="1"/>
</dbReference>
<dbReference type="SUPFAM" id="SSF52540">
    <property type="entry name" value="P-loop containing nucleoside triphosphate hydrolases"/>
    <property type="match status" value="1"/>
</dbReference>
<dbReference type="PROSITE" id="PS00211">
    <property type="entry name" value="ABC_TRANSPORTER_1"/>
    <property type="match status" value="1"/>
</dbReference>
<dbReference type="PROSITE" id="PS50893">
    <property type="entry name" value="ABC_TRANSPORTER_2"/>
    <property type="match status" value="1"/>
</dbReference>
<dbReference type="PROSITE" id="PS51241">
    <property type="entry name" value="MODC"/>
    <property type="match status" value="1"/>
</dbReference>
<dbReference type="PROSITE" id="PS51866">
    <property type="entry name" value="MOP"/>
    <property type="match status" value="1"/>
</dbReference>
<proteinExistence type="inferred from homology"/>